<dbReference type="EMBL" id="CP000305">
    <property type="protein sequence ID" value="ABG19619.1"/>
    <property type="status" value="ALT_INIT"/>
    <property type="molecule type" value="Genomic_DNA"/>
</dbReference>
<dbReference type="EMBL" id="ACNQ01000017">
    <property type="protein sequence ID" value="EEO75805.1"/>
    <property type="molecule type" value="Genomic_DNA"/>
</dbReference>
<dbReference type="RefSeq" id="WP_002217229.1">
    <property type="nucleotide sequence ID" value="NZ_ACNQ01000017.1"/>
</dbReference>
<dbReference type="SMR" id="Q1CEG1"/>
<dbReference type="GeneID" id="57974228"/>
<dbReference type="KEGG" id="ypn:YPN_3292"/>
<dbReference type="HOGENOM" id="CLU_107144_2_1_6"/>
<dbReference type="Proteomes" id="UP000008936">
    <property type="component" value="Chromosome"/>
</dbReference>
<dbReference type="GO" id="GO:0005829">
    <property type="term" value="C:cytosol"/>
    <property type="evidence" value="ECO:0007669"/>
    <property type="project" value="TreeGrafter"/>
</dbReference>
<dbReference type="GO" id="GO:0051537">
    <property type="term" value="F:2 iron, 2 sulfur cluster binding"/>
    <property type="evidence" value="ECO:0007669"/>
    <property type="project" value="UniProtKB-KW"/>
</dbReference>
<dbReference type="GO" id="GO:0003700">
    <property type="term" value="F:DNA-binding transcription factor activity"/>
    <property type="evidence" value="ECO:0007669"/>
    <property type="project" value="UniProtKB-UniRule"/>
</dbReference>
<dbReference type="GO" id="GO:0003690">
    <property type="term" value="F:double-stranded DNA binding"/>
    <property type="evidence" value="ECO:0007669"/>
    <property type="project" value="UniProtKB-UniRule"/>
</dbReference>
<dbReference type="GO" id="GO:0005506">
    <property type="term" value="F:iron ion binding"/>
    <property type="evidence" value="ECO:0007669"/>
    <property type="project" value="UniProtKB-UniRule"/>
</dbReference>
<dbReference type="GO" id="GO:0045892">
    <property type="term" value="P:negative regulation of DNA-templated transcription"/>
    <property type="evidence" value="ECO:0007669"/>
    <property type="project" value="InterPro"/>
</dbReference>
<dbReference type="FunFam" id="1.10.10.10:FF:000105">
    <property type="entry name" value="HTH-type transcriptional repressor NsrR"/>
    <property type="match status" value="1"/>
</dbReference>
<dbReference type="Gene3D" id="1.10.10.10">
    <property type="entry name" value="Winged helix-like DNA-binding domain superfamily/Winged helix DNA-binding domain"/>
    <property type="match status" value="1"/>
</dbReference>
<dbReference type="HAMAP" id="MF_01177">
    <property type="entry name" value="HTH_type_NsrR"/>
    <property type="match status" value="1"/>
</dbReference>
<dbReference type="InterPro" id="IPR030489">
    <property type="entry name" value="TR_Rrf2-type_CS"/>
</dbReference>
<dbReference type="InterPro" id="IPR000944">
    <property type="entry name" value="Tscrpt_reg_Rrf2"/>
</dbReference>
<dbReference type="InterPro" id="IPR023761">
    <property type="entry name" value="Tscrpt_rep_HTH_NsrR"/>
</dbReference>
<dbReference type="InterPro" id="IPR036388">
    <property type="entry name" value="WH-like_DNA-bd_sf"/>
</dbReference>
<dbReference type="InterPro" id="IPR036390">
    <property type="entry name" value="WH_DNA-bd_sf"/>
</dbReference>
<dbReference type="NCBIfam" id="NF008240">
    <property type="entry name" value="PRK11014.1"/>
    <property type="match status" value="1"/>
</dbReference>
<dbReference type="NCBIfam" id="TIGR00738">
    <property type="entry name" value="rrf2_super"/>
    <property type="match status" value="1"/>
</dbReference>
<dbReference type="PANTHER" id="PTHR33221:SF4">
    <property type="entry name" value="HTH-TYPE TRANSCRIPTIONAL REPRESSOR NSRR"/>
    <property type="match status" value="1"/>
</dbReference>
<dbReference type="PANTHER" id="PTHR33221">
    <property type="entry name" value="WINGED HELIX-TURN-HELIX TRANSCRIPTIONAL REGULATOR, RRF2 FAMILY"/>
    <property type="match status" value="1"/>
</dbReference>
<dbReference type="Pfam" id="PF02082">
    <property type="entry name" value="Rrf2"/>
    <property type="match status" value="1"/>
</dbReference>
<dbReference type="SUPFAM" id="SSF46785">
    <property type="entry name" value="Winged helix' DNA-binding domain"/>
    <property type="match status" value="1"/>
</dbReference>
<dbReference type="PROSITE" id="PS01332">
    <property type="entry name" value="HTH_RRF2_1"/>
    <property type="match status" value="1"/>
</dbReference>
<dbReference type="PROSITE" id="PS51197">
    <property type="entry name" value="HTH_RRF2_2"/>
    <property type="match status" value="1"/>
</dbReference>
<name>NSRR_YERPN</name>
<accession>Q1CEG1</accession>
<accession>C4GY05</accession>
<comment type="function">
    <text evidence="1">Nitric oxide-sensitive repressor of genes involved in protecting the cell against nitrosative stress. May require iron for activity.</text>
</comment>
<comment type="cofactor">
    <cofactor evidence="1">
        <name>[2Fe-2S] cluster</name>
        <dbReference type="ChEBI" id="CHEBI:190135"/>
    </cofactor>
    <text evidence="1">Binds 1 [2Fe-2S] cluster per subunit.</text>
</comment>
<comment type="sequence caution" evidence="2">
    <conflict type="erroneous initiation">
        <sequence resource="EMBL-CDS" id="ABG19619"/>
    </conflict>
</comment>
<evidence type="ECO:0000255" key="1">
    <source>
        <dbReference type="HAMAP-Rule" id="MF_01177"/>
    </source>
</evidence>
<evidence type="ECO:0000305" key="2"/>
<gene>
    <name evidence="1" type="primary">nsrR</name>
    <name type="ordered locus">YPN_3292</name>
    <name type="ORF">YP516_3741</name>
</gene>
<keyword id="KW-0001">2Fe-2S</keyword>
<keyword id="KW-0238">DNA-binding</keyword>
<keyword id="KW-0408">Iron</keyword>
<keyword id="KW-0411">Iron-sulfur</keyword>
<keyword id="KW-0479">Metal-binding</keyword>
<keyword id="KW-0678">Repressor</keyword>
<keyword id="KW-0804">Transcription</keyword>
<keyword id="KW-0805">Transcription regulation</keyword>
<feature type="chain" id="PRO_0000268956" description="HTH-type transcriptional repressor NsrR">
    <location>
        <begin position="1"/>
        <end position="141"/>
    </location>
</feature>
<feature type="domain" description="HTH rrf2-type" evidence="1">
    <location>
        <begin position="2"/>
        <end position="129"/>
    </location>
</feature>
<feature type="DNA-binding region" description="H-T-H motif" evidence="1">
    <location>
        <begin position="28"/>
        <end position="51"/>
    </location>
</feature>
<feature type="binding site" evidence="1">
    <location>
        <position position="91"/>
    </location>
    <ligand>
        <name>[2Fe-2S] cluster</name>
        <dbReference type="ChEBI" id="CHEBI:190135"/>
    </ligand>
</feature>
<feature type="binding site" evidence="1">
    <location>
        <position position="96"/>
    </location>
    <ligand>
        <name>[2Fe-2S] cluster</name>
        <dbReference type="ChEBI" id="CHEBI:190135"/>
    </ligand>
</feature>
<feature type="binding site" evidence="1">
    <location>
        <position position="102"/>
    </location>
    <ligand>
        <name>[2Fe-2S] cluster</name>
        <dbReference type="ChEBI" id="CHEBI:190135"/>
    </ligand>
</feature>
<organism>
    <name type="scientific">Yersinia pestis bv. Antiqua (strain Nepal516)</name>
    <dbReference type="NCBI Taxonomy" id="377628"/>
    <lineage>
        <taxon>Bacteria</taxon>
        <taxon>Pseudomonadati</taxon>
        <taxon>Pseudomonadota</taxon>
        <taxon>Gammaproteobacteria</taxon>
        <taxon>Enterobacterales</taxon>
        <taxon>Yersiniaceae</taxon>
        <taxon>Yersinia</taxon>
    </lineage>
</organism>
<reference key="1">
    <citation type="journal article" date="2006" name="J. Bacteriol.">
        <title>Complete genome sequence of Yersinia pestis strains Antiqua and Nepal516: evidence of gene reduction in an emerging pathogen.</title>
        <authorList>
            <person name="Chain P.S.G."/>
            <person name="Hu P."/>
            <person name="Malfatti S.A."/>
            <person name="Radnedge L."/>
            <person name="Larimer F."/>
            <person name="Vergez L.M."/>
            <person name="Worsham P."/>
            <person name="Chu M.C."/>
            <person name="Andersen G.L."/>
        </authorList>
    </citation>
    <scope>NUCLEOTIDE SEQUENCE [LARGE SCALE GENOMIC DNA]</scope>
    <source>
        <strain>Nepal516</strain>
    </source>
</reference>
<reference key="2">
    <citation type="submission" date="2009-04" db="EMBL/GenBank/DDBJ databases">
        <title>Yersinia pestis Nepal516A whole genome shotgun sequencing project.</title>
        <authorList>
            <person name="Plunkett G. III"/>
            <person name="Anderson B.D."/>
            <person name="Baumler D.J."/>
            <person name="Burland V."/>
            <person name="Cabot E.L."/>
            <person name="Glasner J.D."/>
            <person name="Mau B."/>
            <person name="Neeno-Eckwall E."/>
            <person name="Perna N.T."/>
            <person name="Munk A.C."/>
            <person name="Tapia R."/>
            <person name="Green L.D."/>
            <person name="Rogers Y.C."/>
            <person name="Detter J.C."/>
            <person name="Bruce D.C."/>
            <person name="Brettin T.S."/>
        </authorList>
    </citation>
    <scope>NUCLEOTIDE SEQUENCE [LARGE SCALE GENOMIC DNA]</scope>
    <source>
        <strain>Nepal516</strain>
    </source>
</reference>
<sequence length="141" mass="15645">MQLTSFTDYGLRALIYMASLPDGQMTSISQVTEVYGVSRNHMVKIINQLSRVGLVTAVRGKNGGIRLGKPADQILIGDVVRQMEPLTLVNCSSDFCHITPACRLKQVLNQAVQSFLKELDNYTLADMVKDNSPLYKLLLVE</sequence>
<proteinExistence type="inferred from homology"/>
<protein>
    <recommendedName>
        <fullName evidence="1">HTH-type transcriptional repressor NsrR</fullName>
    </recommendedName>
</protein>